<feature type="chain" id="PRO_0000299669" description="Putative uncharacterized protein YMR086C-A">
    <location>
        <begin position="1"/>
        <end position="112"/>
    </location>
</feature>
<accession>Q6Q571</accession>
<protein>
    <recommendedName>
        <fullName>Putative uncharacterized protein YMR086C-A</fullName>
    </recommendedName>
</protein>
<proteinExistence type="uncertain"/>
<evidence type="ECO:0000305" key="1"/>
<evidence type="ECO:0000305" key="2">
    <source>
    </source>
</evidence>
<gene>
    <name type="ordered locus">YMR086C-A</name>
</gene>
<organism>
    <name type="scientific">Saccharomyces cerevisiae (strain ATCC 204508 / S288c)</name>
    <name type="common">Baker's yeast</name>
    <dbReference type="NCBI Taxonomy" id="559292"/>
    <lineage>
        <taxon>Eukaryota</taxon>
        <taxon>Fungi</taxon>
        <taxon>Dikarya</taxon>
        <taxon>Ascomycota</taxon>
        <taxon>Saccharomycotina</taxon>
        <taxon>Saccharomycetes</taxon>
        <taxon>Saccharomycetales</taxon>
        <taxon>Saccharomycetaceae</taxon>
        <taxon>Saccharomyces</taxon>
    </lineage>
</organism>
<reference key="1">
    <citation type="journal article" date="1997" name="Nature">
        <title>The nucleotide sequence of Saccharomyces cerevisiae chromosome XIII.</title>
        <authorList>
            <person name="Bowman S."/>
            <person name="Churcher C.M."/>
            <person name="Badcock K."/>
            <person name="Brown D."/>
            <person name="Chillingworth T."/>
            <person name="Connor R."/>
            <person name="Dedman K."/>
            <person name="Devlin K."/>
            <person name="Gentles S."/>
            <person name="Hamlin N."/>
            <person name="Hunt S."/>
            <person name="Jagels K."/>
            <person name="Lye G."/>
            <person name="Moule S."/>
            <person name="Odell C."/>
            <person name="Pearson D."/>
            <person name="Rajandream M.A."/>
            <person name="Rice P."/>
            <person name="Skelton J."/>
            <person name="Walsh S.V."/>
            <person name="Whitehead S."/>
            <person name="Barrell B.G."/>
        </authorList>
    </citation>
    <scope>NUCLEOTIDE SEQUENCE [LARGE SCALE GENOMIC DNA]</scope>
    <source>
        <strain>ATCC 204508 / S288c</strain>
    </source>
</reference>
<reference key="2">
    <citation type="journal article" date="2014" name="G3 (Bethesda)">
        <title>The reference genome sequence of Saccharomyces cerevisiae: Then and now.</title>
        <authorList>
            <person name="Engel S.R."/>
            <person name="Dietrich F.S."/>
            <person name="Fisk D.G."/>
            <person name="Binkley G."/>
            <person name="Balakrishnan R."/>
            <person name="Costanzo M.C."/>
            <person name="Dwight S.S."/>
            <person name="Hitz B.C."/>
            <person name="Karra K."/>
            <person name="Nash R.S."/>
            <person name="Weng S."/>
            <person name="Wong E.D."/>
            <person name="Lloyd P."/>
            <person name="Skrzypek M.S."/>
            <person name="Miyasato S.R."/>
            <person name="Simison M."/>
            <person name="Cherry J.M."/>
        </authorList>
    </citation>
    <scope>GENOME REANNOTATION</scope>
    <source>
        <strain>ATCC 204508 / S288c</strain>
    </source>
</reference>
<reference key="3">
    <citation type="journal article" date="2007" name="Genome Res.">
        <title>Approaching a complete repository of sequence-verified protein-encoding clones for Saccharomyces cerevisiae.</title>
        <authorList>
            <person name="Hu Y."/>
            <person name="Rolfs A."/>
            <person name="Bhullar B."/>
            <person name="Murthy T.V.S."/>
            <person name="Zhu C."/>
            <person name="Berger M.F."/>
            <person name="Camargo A.A."/>
            <person name="Kelley F."/>
            <person name="McCarron S."/>
            <person name="Jepson D."/>
            <person name="Richardson A."/>
            <person name="Raphael J."/>
            <person name="Moreira D."/>
            <person name="Taycher E."/>
            <person name="Zuo D."/>
            <person name="Mohr S."/>
            <person name="Kane M.F."/>
            <person name="Williamson J."/>
            <person name="Simpson A.J.G."/>
            <person name="Bulyk M.L."/>
            <person name="Harlow E."/>
            <person name="Marsischky G."/>
            <person name="Kolodner R.D."/>
            <person name="LaBaer J."/>
        </authorList>
    </citation>
    <scope>NUCLEOTIDE SEQUENCE [GENOMIC DNA]</scope>
    <source>
        <strain>ATCC 204508 / S288c</strain>
    </source>
</reference>
<comment type="miscellaneous">
    <text evidence="1">Partially overlaps YMR086W.</text>
</comment>
<comment type="caution">
    <text evidence="2">Product of a dubious gene prediction unlikely to encode a functional protein. Because of that it is not part of the S.cerevisiae S288c complete/reference proteome set.</text>
</comment>
<name>YM086_YEAST</name>
<sequence>MLLFCYCLLLGTRIGTRIGTRIFIVHPIISPLIAVETAKKKKHIKWRFLDYSLLKNPLYVTVHGSHRSEVERARKRIKYITCTRREFLPRVPISFYQRFFSVFCRNYPSFLL</sequence>
<dbReference type="EMBL" id="Z49259">
    <property type="status" value="NOT_ANNOTATED_CDS"/>
    <property type="molecule type" value="Genomic_DNA"/>
</dbReference>
<dbReference type="EMBL" id="AY558404">
    <property type="protein sequence ID" value="AAS56730.1"/>
    <property type="molecule type" value="Genomic_DNA"/>
</dbReference>
<dbReference type="IntAct" id="Q6Q571">
    <property type="interactions" value="1"/>
</dbReference>
<dbReference type="PaxDb" id="4932-YMR086C-A"/>
<dbReference type="EnsemblFungi" id="YMR086C-A_mRNA">
    <property type="protein sequence ID" value="YMR086C-A"/>
    <property type="gene ID" value="YMR086C-A"/>
</dbReference>
<dbReference type="AGR" id="SGD:S000004691"/>
<dbReference type="SGD" id="S000004691">
    <property type="gene designation" value="YMR086C-A"/>
</dbReference>
<dbReference type="HOGENOM" id="CLU_2147833_0_0_1"/>